<evidence type="ECO:0000250" key="1"/>
<evidence type="ECO:0000250" key="2">
    <source>
        <dbReference type="UniProtKB" id="P79385"/>
    </source>
</evidence>
<evidence type="ECO:0000305" key="3"/>
<gene>
    <name evidence="2" type="primary">MFGE8</name>
</gene>
<reference evidence="3" key="1">
    <citation type="journal article" date="2007" name="Anal. Bioanal. Chem.">
        <title>Access to lower abundant bovine and caprine whey proteins: the impact of caseins and lactoglobulin on proteome analysis.</title>
        <authorList>
            <person name="Koenig S."/>
            <person name="Mehlich A.M."/>
            <person name="Ackermann D."/>
        </authorList>
    </citation>
    <scope>PROTEIN SEQUENCE</scope>
</reference>
<organism>
    <name type="scientific">Capra hircus</name>
    <name type="common">Goat</name>
    <dbReference type="NCBI Taxonomy" id="9925"/>
    <lineage>
        <taxon>Eukaryota</taxon>
        <taxon>Metazoa</taxon>
        <taxon>Chordata</taxon>
        <taxon>Craniata</taxon>
        <taxon>Vertebrata</taxon>
        <taxon>Euteleostomi</taxon>
        <taxon>Mammalia</taxon>
        <taxon>Eutheria</taxon>
        <taxon>Laurasiatheria</taxon>
        <taxon>Artiodactyla</taxon>
        <taxon>Ruminantia</taxon>
        <taxon>Pecora</taxon>
        <taxon>Bovidae</taxon>
        <taxon>Caprinae</taxon>
        <taxon>Capra</taxon>
    </lineage>
</organism>
<sequence>DFGHIQYVAAYR</sequence>
<name>MFGM_CAPHI</name>
<comment type="function">
    <text evidence="1">Specific ligand for the alpha-v/beta-3 and alpha-v/beta-5 receptors. Also binds to phosphatidylserine-enriched cell surfaces in a receptor-independent manner. Zona pellucida-binding protein which may play a role in gamete interaction. Contributes to phagocytic removal of apoptotic cells in many tissues. Plays an important role in the maintenance of intestinal epithelial homeostasis and the promotion of mucosal healing. Promotes VEGF-dependent neovascularization (By similarity).</text>
</comment>
<comment type="subcellular location">
    <subcellularLocation>
        <location evidence="2">Membrane</location>
        <topology evidence="2">Peripheral membrane protein</topology>
    </subcellularLocation>
    <subcellularLocation>
        <location evidence="2">Secreted</location>
    </subcellularLocation>
    <subcellularLocation>
        <location evidence="2">Cytoplasmic vesicle</location>
        <location evidence="2">Secretory vesicle</location>
        <location evidence="2">Acrosome membrane</location>
        <topology evidence="2">Peripheral membrane protein</topology>
    </subcellularLocation>
    <text evidence="2">Located in the acrosomal region of zona-pellucida bound sperm.</text>
</comment>
<keyword id="KW-0037">Angiogenesis</keyword>
<keyword id="KW-0130">Cell adhesion</keyword>
<keyword id="KW-0968">Cytoplasmic vesicle</keyword>
<keyword id="KW-0903">Direct protein sequencing</keyword>
<keyword id="KW-0278">Fertilization</keyword>
<keyword id="KW-0472">Membrane</keyword>
<keyword id="KW-1185">Reference proteome</keyword>
<keyword id="KW-0964">Secreted</keyword>
<accession>P85297</accession>
<protein>
    <recommendedName>
        <fullName>Lactadherin</fullName>
    </recommendedName>
    <alternativeName>
        <fullName>MFGM</fullName>
    </alternativeName>
    <alternativeName>
        <fullName>Milk fat globule-EGF factor 8</fullName>
        <shortName>MFG-E8</shortName>
    </alternativeName>
    <alternativeName>
        <fullName>SED1</fullName>
    </alternativeName>
</protein>
<dbReference type="Proteomes" id="UP000291000">
    <property type="component" value="Unassembled WGS sequence"/>
</dbReference>
<dbReference type="Proteomes" id="UP000694566">
    <property type="component" value="Unplaced"/>
</dbReference>
<dbReference type="GO" id="GO:0002080">
    <property type="term" value="C:acrosomal membrane"/>
    <property type="evidence" value="ECO:0007669"/>
    <property type="project" value="UniProtKB-SubCell"/>
</dbReference>
<dbReference type="GO" id="GO:0005576">
    <property type="term" value="C:extracellular region"/>
    <property type="evidence" value="ECO:0007669"/>
    <property type="project" value="UniProtKB-SubCell"/>
</dbReference>
<dbReference type="GO" id="GO:0001525">
    <property type="term" value="P:angiogenesis"/>
    <property type="evidence" value="ECO:0007669"/>
    <property type="project" value="UniProtKB-KW"/>
</dbReference>
<dbReference type="GO" id="GO:0007155">
    <property type="term" value="P:cell adhesion"/>
    <property type="evidence" value="ECO:0007669"/>
    <property type="project" value="UniProtKB-KW"/>
</dbReference>
<dbReference type="GO" id="GO:0007338">
    <property type="term" value="P:single fertilization"/>
    <property type="evidence" value="ECO:0007669"/>
    <property type="project" value="UniProtKB-KW"/>
</dbReference>
<proteinExistence type="evidence at protein level"/>
<feature type="chain" id="PRO_0000308187" description="Lactadherin">
    <location>
        <begin position="1" status="less than"/>
        <end position="12" status="greater than"/>
    </location>
</feature>
<feature type="unsure residue" description="I or L">
    <location>
        <position position="5"/>
    </location>
</feature>
<feature type="unsure residue" description="Q or K">
    <location>
        <position position="6"/>
    </location>
</feature>
<feature type="non-terminal residue">
    <location>
        <position position="1"/>
    </location>
</feature>
<feature type="non-terminal residue">
    <location>
        <position position="12"/>
    </location>
</feature>